<keyword id="KW-1064">Adaptive immunity</keyword>
<keyword id="KW-1003">Cell membrane</keyword>
<keyword id="KW-1015">Disulfide bond</keyword>
<keyword id="KW-0391">Immunity</keyword>
<keyword id="KW-1280">Immunoglobulin</keyword>
<keyword id="KW-0393">Immunoglobulin domain</keyword>
<keyword id="KW-0472">Membrane</keyword>
<keyword id="KW-1267">Proteomics identification</keyword>
<keyword id="KW-1185">Reference proteome</keyword>
<keyword id="KW-0964">Secreted</keyword>
<keyword id="KW-0732">Signal</keyword>
<proteinExistence type="evidence at protein level"/>
<reference key="1">
    <citation type="journal article" date="1999" name="Nature">
        <title>The DNA sequence of human chromosome 22.</title>
        <authorList>
            <person name="Dunham I."/>
            <person name="Hunt A.R."/>
            <person name="Collins J.E."/>
            <person name="Bruskiewich R."/>
            <person name="Beare D.M."/>
            <person name="Clamp M."/>
            <person name="Smink L.J."/>
            <person name="Ainscough R."/>
            <person name="Almeida J.P."/>
            <person name="Babbage A.K."/>
            <person name="Bagguley C."/>
            <person name="Bailey J."/>
            <person name="Barlow K.F."/>
            <person name="Bates K.N."/>
            <person name="Beasley O.P."/>
            <person name="Bird C.P."/>
            <person name="Blakey S.E."/>
            <person name="Bridgeman A.M."/>
            <person name="Buck D."/>
            <person name="Burgess J."/>
            <person name="Burrill W.D."/>
            <person name="Burton J."/>
            <person name="Carder C."/>
            <person name="Carter N.P."/>
            <person name="Chen Y."/>
            <person name="Clark G."/>
            <person name="Clegg S.M."/>
            <person name="Cobley V.E."/>
            <person name="Cole C.G."/>
            <person name="Collier R.E."/>
            <person name="Connor R."/>
            <person name="Conroy D."/>
            <person name="Corby N.R."/>
            <person name="Coville G.J."/>
            <person name="Cox A.V."/>
            <person name="Davis J."/>
            <person name="Dawson E."/>
            <person name="Dhami P.D."/>
            <person name="Dockree C."/>
            <person name="Dodsworth S.J."/>
            <person name="Durbin R.M."/>
            <person name="Ellington A.G."/>
            <person name="Evans K.L."/>
            <person name="Fey J.M."/>
            <person name="Fleming K."/>
            <person name="French L."/>
            <person name="Garner A.A."/>
            <person name="Gilbert J.G.R."/>
            <person name="Goward M.E."/>
            <person name="Grafham D.V."/>
            <person name="Griffiths M.N.D."/>
            <person name="Hall C."/>
            <person name="Hall R.E."/>
            <person name="Hall-Tamlyn G."/>
            <person name="Heathcott R.W."/>
            <person name="Ho S."/>
            <person name="Holmes S."/>
            <person name="Hunt S.E."/>
            <person name="Jones M.C."/>
            <person name="Kershaw J."/>
            <person name="Kimberley A.M."/>
            <person name="King A."/>
            <person name="Laird G.K."/>
            <person name="Langford C.F."/>
            <person name="Leversha M.A."/>
            <person name="Lloyd C."/>
            <person name="Lloyd D.M."/>
            <person name="Martyn I.D."/>
            <person name="Mashreghi-Mohammadi M."/>
            <person name="Matthews L.H."/>
            <person name="Mccann O.T."/>
            <person name="Mcclay J."/>
            <person name="Mclaren S."/>
            <person name="McMurray A.A."/>
            <person name="Milne S.A."/>
            <person name="Mortimore B.J."/>
            <person name="Odell C.N."/>
            <person name="Pavitt R."/>
            <person name="Pearce A.V."/>
            <person name="Pearson D."/>
            <person name="Phillimore B.J.C.T."/>
            <person name="Phillips S.H."/>
            <person name="Plumb R.W."/>
            <person name="Ramsay H."/>
            <person name="Ramsey Y."/>
            <person name="Rogers L."/>
            <person name="Ross M.T."/>
            <person name="Scott C.E."/>
            <person name="Sehra H.K."/>
            <person name="Skuce C.D."/>
            <person name="Smalley S."/>
            <person name="Smith M.L."/>
            <person name="Soderlund C."/>
            <person name="Spragon L."/>
            <person name="Steward C.A."/>
            <person name="Sulston J.E."/>
            <person name="Swann R.M."/>
            <person name="Vaudin M."/>
            <person name="Wall M."/>
            <person name="Wallis J.M."/>
            <person name="Whiteley M.N."/>
            <person name="Willey D.L."/>
            <person name="Williams L."/>
            <person name="Williams S.A."/>
            <person name="Williamson H."/>
            <person name="Wilmer T.E."/>
            <person name="Wilming L."/>
            <person name="Wright C.L."/>
            <person name="Hubbard T."/>
            <person name="Bentley D.R."/>
            <person name="Beck S."/>
            <person name="Rogers J."/>
            <person name="Shimizu N."/>
            <person name="Minoshima S."/>
            <person name="Kawasaki K."/>
            <person name="Sasaki T."/>
            <person name="Asakawa S."/>
            <person name="Kudoh J."/>
            <person name="Shintani A."/>
            <person name="Shibuya K."/>
            <person name="Yoshizaki Y."/>
            <person name="Aoki N."/>
            <person name="Mitsuyama S."/>
            <person name="Roe B.A."/>
            <person name="Chen F."/>
            <person name="Chu L."/>
            <person name="Crabtree J."/>
            <person name="Deschamps S."/>
            <person name="Do A."/>
            <person name="Do T."/>
            <person name="Dorman A."/>
            <person name="Fang F."/>
            <person name="Fu Y."/>
            <person name="Hu P."/>
            <person name="Hua A."/>
            <person name="Kenton S."/>
            <person name="Lai H."/>
            <person name="Lao H.I."/>
            <person name="Lewis J."/>
            <person name="Lewis S."/>
            <person name="Lin S.-P."/>
            <person name="Loh P."/>
            <person name="Malaj E."/>
            <person name="Nguyen T."/>
            <person name="Pan H."/>
            <person name="Phan S."/>
            <person name="Qi S."/>
            <person name="Qian Y."/>
            <person name="Ray L."/>
            <person name="Ren Q."/>
            <person name="Shaull S."/>
            <person name="Sloan D."/>
            <person name="Song L."/>
            <person name="Wang Q."/>
            <person name="Wang Y."/>
            <person name="Wang Z."/>
            <person name="White J."/>
            <person name="Willingham D."/>
            <person name="Wu H."/>
            <person name="Yao Z."/>
            <person name="Zhan M."/>
            <person name="Zhang G."/>
            <person name="Chissoe S."/>
            <person name="Murray J."/>
            <person name="Miller N."/>
            <person name="Minx P."/>
            <person name="Fulton R."/>
            <person name="Johnson D."/>
            <person name="Bemis G."/>
            <person name="Bentley D."/>
            <person name="Bradshaw H."/>
            <person name="Bourne S."/>
            <person name="Cordes M."/>
            <person name="Du Z."/>
            <person name="Fulton L."/>
            <person name="Goela D."/>
            <person name="Graves T."/>
            <person name="Hawkins J."/>
            <person name="Hinds K."/>
            <person name="Kemp K."/>
            <person name="Latreille P."/>
            <person name="Layman D."/>
            <person name="Ozersky P."/>
            <person name="Rohlfing T."/>
            <person name="Scheet P."/>
            <person name="Walker C."/>
            <person name="Wamsley A."/>
            <person name="Wohldmann P."/>
            <person name="Pepin K."/>
            <person name="Nelson J."/>
            <person name="Korf I."/>
            <person name="Bedell J.A."/>
            <person name="Hillier L.W."/>
            <person name="Mardis E."/>
            <person name="Waterston R."/>
            <person name="Wilson R."/>
            <person name="Emanuel B.S."/>
            <person name="Shaikh T."/>
            <person name="Kurahashi H."/>
            <person name="Saitta S."/>
            <person name="Budarf M.L."/>
            <person name="McDermid H.E."/>
            <person name="Johnson A."/>
            <person name="Wong A.C.C."/>
            <person name="Morrow B.E."/>
            <person name="Edelmann L."/>
            <person name="Kim U.J."/>
            <person name="Shizuya H."/>
            <person name="Simon M.I."/>
            <person name="Dumanski J.P."/>
            <person name="Peyrard M."/>
            <person name="Kedra D."/>
            <person name="Seroussi E."/>
            <person name="Fransson I."/>
            <person name="Tapia I."/>
            <person name="Bruder C.E."/>
            <person name="O'Brien K.P."/>
            <person name="Wilkinson P."/>
            <person name="Bodenteich A."/>
            <person name="Hartman K."/>
            <person name="Hu X."/>
            <person name="Khan A.S."/>
            <person name="Lane L."/>
            <person name="Tilahun Y."/>
            <person name="Wright H."/>
        </authorList>
    </citation>
    <scope>NUCLEOTIDE SEQUENCE [LARGE SCALE GENOMIC DNA] (IMGT ALLELE IGLV4-69*01)</scope>
</reference>
<reference key="2">
    <citation type="journal article" date="2001" name="Exp. Clin. Immunogenet.">
        <title>Nomenclature of the human immunoglobulin lambda (IGL) genes.</title>
        <authorList>
            <person name="Lefranc M.P."/>
        </authorList>
    </citation>
    <scope>NOMENCLATURE</scope>
</reference>
<reference key="3">
    <citation type="book" date="2001" name="The Immunoglobulin FactsBook.">
        <title>The Immunoglobulin FactsBook.</title>
        <editorList>
            <person name="Lefranc M.P."/>
            <person name="Lefranc G."/>
        </editorList>
        <authorList>
            <person name="Lefranc M.P."/>
            <person name="Lefranc G."/>
        </authorList>
    </citation>
    <scope>NOMENCLATURE</scope>
</reference>
<reference key="4">
    <citation type="journal article" date="2007" name="Annu. Rev. Genet.">
        <title>Immunoglobulin somatic hypermutation.</title>
        <authorList>
            <person name="Teng G."/>
            <person name="Papavasiliou F.N."/>
        </authorList>
    </citation>
    <scope>REVIEW ON SOMATIC HYPERMUTATION</scope>
</reference>
<reference key="5">
    <citation type="journal article" date="2010" name="J. Allergy Clin. Immunol.">
        <title>Structure and function of immunoglobulins.</title>
        <authorList>
            <person name="Schroeder H.W. Jr."/>
            <person name="Cavacini L."/>
        </authorList>
    </citation>
    <scope>REVIEW ON IMMUNOGLOBULINS</scope>
</reference>
<reference key="6">
    <citation type="journal article" date="2012" name="Nat. Rev. Immunol.">
        <title>Molecular programming of B cell memory.</title>
        <authorList>
            <person name="McHeyzer-Williams M."/>
            <person name="Okitsu S."/>
            <person name="Wang N."/>
            <person name="McHeyzer-Williams L."/>
        </authorList>
    </citation>
    <scope>REVIEW ON FUNCTION</scope>
</reference>
<reference key="7">
    <citation type="journal article" date="2014" name="Front. Immunol.">
        <title>Immunoglobulin and T Cell Receptor Genes: IMGT((R)) and the Birth and Rise of Immunoinformatics.</title>
        <authorList>
            <person name="Lefranc M.P."/>
        </authorList>
    </citation>
    <scope>NOMENCLATURE</scope>
</reference>
<reference key="8">
    <citation type="journal article" date="2014" name="J. Proteomics">
        <title>An enzyme assisted RP-RPLC approach for in-depth analysis of human liver phosphoproteome.</title>
        <authorList>
            <person name="Bian Y."/>
            <person name="Song C."/>
            <person name="Cheng K."/>
            <person name="Dong M."/>
            <person name="Wang F."/>
            <person name="Huang J."/>
            <person name="Sun D."/>
            <person name="Wang L."/>
            <person name="Ye M."/>
            <person name="Zou H."/>
        </authorList>
    </citation>
    <scope>IDENTIFICATION BY MASS SPECTROMETRY [LARGE SCALE ANALYSIS]</scope>
    <source>
        <tissue>Liver</tissue>
    </source>
</reference>
<feature type="signal peptide" evidence="2">
    <location>
        <begin position="1"/>
        <end position="20"/>
    </location>
</feature>
<feature type="chain" id="PRO_5001705163" description="Immunoglobulin lambda variable 4-69" evidence="2">
    <location>
        <begin position="21"/>
        <end position="119"/>
    </location>
</feature>
<feature type="domain" description="Ig-like" evidence="3">
    <location>
        <begin position="21"/>
        <end position="119" status="greater than"/>
    </location>
</feature>
<feature type="region of interest" description="Framework-1" evidence="1">
    <location>
        <begin position="21"/>
        <end position="45"/>
    </location>
</feature>
<feature type="region of interest" description="Complementarity-determining-1" evidence="1">
    <location>
        <begin position="46"/>
        <end position="52"/>
    </location>
</feature>
<feature type="region of interest" description="Framework-2" evidence="1">
    <location>
        <begin position="53"/>
        <end position="69"/>
    </location>
</feature>
<feature type="region of interest" description="Complementarity-determining-2" evidence="1">
    <location>
        <begin position="70"/>
        <end position="76"/>
    </location>
</feature>
<feature type="region of interest" description="Disordered" evidence="4">
    <location>
        <begin position="73"/>
        <end position="92"/>
    </location>
</feature>
<feature type="region of interest" description="Framework-3" evidence="1">
    <location>
        <begin position="77"/>
        <end position="112"/>
    </location>
</feature>
<feature type="region of interest" description="Complementarity-determining-3" evidence="1">
    <location>
        <begin position="113"/>
        <end position="119" status="greater than"/>
    </location>
</feature>
<feature type="disulfide bond" evidence="3">
    <location>
        <begin position="42"/>
        <end position="112"/>
    </location>
</feature>
<feature type="non-terminal residue">
    <location>
        <position position="119"/>
    </location>
</feature>
<organism>
    <name type="scientific">Homo sapiens</name>
    <name type="common">Human</name>
    <dbReference type="NCBI Taxonomy" id="9606"/>
    <lineage>
        <taxon>Eukaryota</taxon>
        <taxon>Metazoa</taxon>
        <taxon>Chordata</taxon>
        <taxon>Craniata</taxon>
        <taxon>Vertebrata</taxon>
        <taxon>Euteleostomi</taxon>
        <taxon>Mammalia</taxon>
        <taxon>Eutheria</taxon>
        <taxon>Euarchontoglires</taxon>
        <taxon>Primates</taxon>
        <taxon>Haplorrhini</taxon>
        <taxon>Catarrhini</taxon>
        <taxon>Hominidae</taxon>
        <taxon>Homo</taxon>
    </lineage>
</organism>
<accession>A0A075B6H9</accession>
<dbReference type="EMBL" id="AC245452">
    <property type="status" value="NOT_ANNOTATED_CDS"/>
    <property type="molecule type" value="Genomic_DNA"/>
</dbReference>
<dbReference type="SMR" id="A0A075B6H9"/>
<dbReference type="FunCoup" id="A0A075B6H9">
    <property type="interactions" value="255"/>
</dbReference>
<dbReference type="IMGT_GENE-DB" id="IGLV4-69"/>
<dbReference type="BioMuta" id="IGLV4-69"/>
<dbReference type="MassIVE" id="A0A075B6H9"/>
<dbReference type="Ensembl" id="ENST00000390282.2">
    <property type="protein sequence ID" value="ENSP00000374817.2"/>
    <property type="gene ID" value="ENSG00000211637.2"/>
</dbReference>
<dbReference type="UCSC" id="uc062cba.1">
    <property type="organism name" value="human"/>
</dbReference>
<dbReference type="AGR" id="HGNC:5921"/>
<dbReference type="GeneCards" id="IGLV4-69"/>
<dbReference type="HGNC" id="HGNC:5921">
    <property type="gene designation" value="IGLV4-69"/>
</dbReference>
<dbReference type="HPA" id="ENSG00000211637">
    <property type="expression patterns" value="Group enriched (intestine, lymphoid tissue, salivary gland, stomach, urinary bladder)"/>
</dbReference>
<dbReference type="neXtProt" id="NX_A0A075B6H9"/>
<dbReference type="OpenTargets" id="ENSG00000211637"/>
<dbReference type="VEuPathDB" id="HostDB:ENSG00000211637"/>
<dbReference type="GeneTree" id="ENSGT00940000153934"/>
<dbReference type="HOGENOM" id="CLU_077975_4_0_1"/>
<dbReference type="InParanoid" id="A0A075B6H9"/>
<dbReference type="OMA" id="ADYYCHT"/>
<dbReference type="OrthoDB" id="9536782at2759"/>
<dbReference type="PAN-GO" id="A0A075B6H9">
    <property type="GO annotations" value="3 GO annotations based on evolutionary models"/>
</dbReference>
<dbReference type="PhylomeDB" id="A0A075B6H9"/>
<dbReference type="ChiTaRS" id="IGLV4-69">
    <property type="organism name" value="human"/>
</dbReference>
<dbReference type="Pharos" id="A0A075B6H9">
    <property type="development level" value="Tdark"/>
</dbReference>
<dbReference type="PRO" id="PR:A0A075B6H9"/>
<dbReference type="Proteomes" id="UP000005640">
    <property type="component" value="Chromosome 22"/>
</dbReference>
<dbReference type="RNAct" id="A0A075B6H9">
    <property type="molecule type" value="protein"/>
</dbReference>
<dbReference type="Bgee" id="ENSG00000211637">
    <property type="expression patterns" value="Expressed in duodenum and 86 other cell types or tissues"/>
</dbReference>
<dbReference type="GO" id="GO:0005576">
    <property type="term" value="C:extracellular region"/>
    <property type="evidence" value="ECO:0007669"/>
    <property type="project" value="UniProtKB-SubCell"/>
</dbReference>
<dbReference type="GO" id="GO:0019814">
    <property type="term" value="C:immunoglobulin complex"/>
    <property type="evidence" value="ECO:0000318"/>
    <property type="project" value="GO_Central"/>
</dbReference>
<dbReference type="GO" id="GO:0005886">
    <property type="term" value="C:plasma membrane"/>
    <property type="evidence" value="ECO:0007669"/>
    <property type="project" value="UniProtKB-SubCell"/>
</dbReference>
<dbReference type="GO" id="GO:0002250">
    <property type="term" value="P:adaptive immune response"/>
    <property type="evidence" value="ECO:0007669"/>
    <property type="project" value="UniProtKB-KW"/>
</dbReference>
<dbReference type="GO" id="GO:0006955">
    <property type="term" value="P:immune response"/>
    <property type="evidence" value="ECO:0000318"/>
    <property type="project" value="GO_Central"/>
</dbReference>
<dbReference type="FunFam" id="2.60.40.10:FF:001671">
    <property type="entry name" value="Immunoglobulin lambda variable 4-69"/>
    <property type="match status" value="1"/>
</dbReference>
<dbReference type="Gene3D" id="2.60.40.10">
    <property type="entry name" value="Immunoglobulins"/>
    <property type="match status" value="1"/>
</dbReference>
<dbReference type="InterPro" id="IPR007110">
    <property type="entry name" value="Ig-like_dom"/>
</dbReference>
<dbReference type="InterPro" id="IPR036179">
    <property type="entry name" value="Ig-like_dom_sf"/>
</dbReference>
<dbReference type="InterPro" id="IPR013783">
    <property type="entry name" value="Ig-like_fold"/>
</dbReference>
<dbReference type="InterPro" id="IPR003599">
    <property type="entry name" value="Ig_sub"/>
</dbReference>
<dbReference type="InterPro" id="IPR013106">
    <property type="entry name" value="Ig_V-set"/>
</dbReference>
<dbReference type="InterPro" id="IPR050150">
    <property type="entry name" value="IgV_Light_Chain"/>
</dbReference>
<dbReference type="PANTHER" id="PTHR23267">
    <property type="entry name" value="IMMUNOGLOBULIN LIGHT CHAIN"/>
    <property type="match status" value="1"/>
</dbReference>
<dbReference type="Pfam" id="PF07686">
    <property type="entry name" value="V-set"/>
    <property type="match status" value="1"/>
</dbReference>
<dbReference type="SMART" id="SM00409">
    <property type="entry name" value="IG"/>
    <property type="match status" value="1"/>
</dbReference>
<dbReference type="SMART" id="SM00406">
    <property type="entry name" value="IGv"/>
    <property type="match status" value="1"/>
</dbReference>
<dbReference type="SUPFAM" id="SSF48726">
    <property type="entry name" value="Immunoglobulin"/>
    <property type="match status" value="1"/>
</dbReference>
<dbReference type="PROSITE" id="PS50835">
    <property type="entry name" value="IG_LIKE"/>
    <property type="match status" value="1"/>
</dbReference>
<protein>
    <recommendedName>
        <fullName evidence="5 10">Immunoglobulin lambda variable 4-69</fullName>
    </recommendedName>
</protein>
<name>LV469_HUMAN</name>
<sequence>MAWTPLLFLTLLLHCTGSLSQLVLTQSPSASASLGASVKLTCTLSSGHSSYAIAWHQQQPEKGPRYLMKLNSDGSHSKGDGIPDRFSGSSSGAERYLTISSLQSEDEADYYCQTWGTGI</sequence>
<comment type="function">
    <text evidence="6 7 8 9">V region of the variable domain of immunoglobulin light chains that participates in the antigen recognition (PubMed:24600447). Immunoglobulins, also known as antibodies, are membrane-bound or secreted glycoproteins produced by B lymphocytes. In the recognition phase of humoral immunity, the membrane-bound immunoglobulins serve as receptors which, upon binding of a specific antigen, trigger the clonal expansion and differentiation of B lymphocytes into immunoglobulins-secreting plasma cells. Secreted immunoglobulins mediate the effector phase of humoral immunity, which results in the elimination of bound antigens (PubMed:20176268, PubMed:22158414). The antigen binding site is formed by the variable domain of one heavy chain, together with that of its associated light chain. Thus, each immunoglobulin has two antigen binding sites with remarkable affinity for a particular antigen. The variable domains are assembled by a process called V-(D)-J rearrangement and can then be subjected to somatic hypermutations which, after exposure to antigen and selection, allow affinity maturation for a particular antigen (PubMed:17576170, PubMed:20176268).</text>
</comment>
<comment type="subunit">
    <text evidence="7">Immunoglobulins are composed of two identical heavy chains and two identical light chains; disulfide-linked.</text>
</comment>
<comment type="subcellular location">
    <subcellularLocation>
        <location evidence="7 8">Secreted</location>
    </subcellularLocation>
    <subcellularLocation>
        <location evidence="7 8">Cell membrane</location>
    </subcellularLocation>
</comment>
<comment type="polymorphism">
    <text>There are several alleles. The sequence shown is that of IMGT allele IGLV4-69*01.</text>
</comment>
<comment type="caution">
    <text evidence="11">For an example of a full-length immunoglobulin lambda light chain see AC P0DOX8.</text>
</comment>
<evidence type="ECO:0000250" key="1">
    <source>
        <dbReference type="UniProtKB" id="P01721"/>
    </source>
</evidence>
<evidence type="ECO:0000255" key="2"/>
<evidence type="ECO:0000255" key="3">
    <source>
        <dbReference type="PROSITE-ProRule" id="PRU00114"/>
    </source>
</evidence>
<evidence type="ECO:0000256" key="4">
    <source>
        <dbReference type="SAM" id="MobiDB-lite"/>
    </source>
</evidence>
<evidence type="ECO:0000303" key="5">
    <source>
    </source>
</evidence>
<evidence type="ECO:0000303" key="6">
    <source>
    </source>
</evidence>
<evidence type="ECO:0000303" key="7">
    <source>
    </source>
</evidence>
<evidence type="ECO:0000303" key="8">
    <source>
    </source>
</evidence>
<evidence type="ECO:0000303" key="9">
    <source>
    </source>
</evidence>
<evidence type="ECO:0000303" key="10">
    <source ref="3"/>
</evidence>
<evidence type="ECO:0000305" key="11"/>
<gene>
    <name evidence="5 10" type="primary">IGLV4-69</name>
</gene>